<feature type="chain" id="PRO_1000044748" description="UPF0251 protein DSY3441">
    <location>
        <begin position="1"/>
        <end position="125"/>
    </location>
</feature>
<sequence>MPRPMKWRKVCCLPESNRFGPLDLNAGDQNQVKMTVDEYETIRLIDLEGFTQEECAKKMNVARTTVQGIYIEARKKLAESLVNGKVLQIEGGEYRLCDGLGNGCGQGCYKRRRRMGCSGKEEGED</sequence>
<comment type="similarity">
    <text evidence="1">Belongs to the UPF0251 family.</text>
</comment>
<gene>
    <name type="ordered locus">DSY3441</name>
</gene>
<proteinExistence type="inferred from homology"/>
<name>Y3441_DESHY</name>
<organism>
    <name type="scientific">Desulfitobacterium hafniense (strain Y51)</name>
    <dbReference type="NCBI Taxonomy" id="138119"/>
    <lineage>
        <taxon>Bacteria</taxon>
        <taxon>Bacillati</taxon>
        <taxon>Bacillota</taxon>
        <taxon>Clostridia</taxon>
        <taxon>Eubacteriales</taxon>
        <taxon>Desulfitobacteriaceae</taxon>
        <taxon>Desulfitobacterium</taxon>
    </lineage>
</organism>
<keyword id="KW-1185">Reference proteome</keyword>
<dbReference type="EMBL" id="AP008230">
    <property type="protein sequence ID" value="BAE85230.1"/>
    <property type="molecule type" value="Genomic_DNA"/>
</dbReference>
<dbReference type="RefSeq" id="WP_011461119.1">
    <property type="nucleotide sequence ID" value="NC_007907.1"/>
</dbReference>
<dbReference type="SMR" id="Q24RW2"/>
<dbReference type="STRING" id="138119.DSY3441"/>
<dbReference type="KEGG" id="dsy:DSY3441"/>
<dbReference type="eggNOG" id="COG1342">
    <property type="taxonomic scope" value="Bacteria"/>
</dbReference>
<dbReference type="HOGENOM" id="CLU_094511_1_0_9"/>
<dbReference type="Proteomes" id="UP000001946">
    <property type="component" value="Chromosome"/>
</dbReference>
<dbReference type="Gene3D" id="1.10.10.10">
    <property type="entry name" value="Winged helix-like DNA-binding domain superfamily/Winged helix DNA-binding domain"/>
    <property type="match status" value="1"/>
</dbReference>
<dbReference type="HAMAP" id="MF_00674">
    <property type="entry name" value="UPF0251"/>
    <property type="match status" value="1"/>
</dbReference>
<dbReference type="InterPro" id="IPR013324">
    <property type="entry name" value="RNA_pol_sigma_r3/r4-like"/>
</dbReference>
<dbReference type="InterPro" id="IPR002852">
    <property type="entry name" value="UPF0251"/>
</dbReference>
<dbReference type="InterPro" id="IPR036388">
    <property type="entry name" value="WH-like_DNA-bd_sf"/>
</dbReference>
<dbReference type="PANTHER" id="PTHR37478">
    <property type="match status" value="1"/>
</dbReference>
<dbReference type="PANTHER" id="PTHR37478:SF2">
    <property type="entry name" value="UPF0251 PROTEIN TK0562"/>
    <property type="match status" value="1"/>
</dbReference>
<dbReference type="Pfam" id="PF02001">
    <property type="entry name" value="DUF134"/>
    <property type="match status" value="1"/>
</dbReference>
<dbReference type="SUPFAM" id="SSF88659">
    <property type="entry name" value="Sigma3 and sigma4 domains of RNA polymerase sigma factors"/>
    <property type="match status" value="1"/>
</dbReference>
<protein>
    <recommendedName>
        <fullName evidence="1">UPF0251 protein DSY3441</fullName>
    </recommendedName>
</protein>
<reference key="1">
    <citation type="journal article" date="2006" name="J. Bacteriol.">
        <title>Complete genome sequence of the dehalorespiring bacterium Desulfitobacterium hafniense Y51 and comparison with Dehalococcoides ethenogenes 195.</title>
        <authorList>
            <person name="Nonaka H."/>
            <person name="Keresztes G."/>
            <person name="Shinoda Y."/>
            <person name="Ikenaga Y."/>
            <person name="Abe M."/>
            <person name="Naito K."/>
            <person name="Inatomi K."/>
            <person name="Furukawa K."/>
            <person name="Inui M."/>
            <person name="Yukawa H."/>
        </authorList>
    </citation>
    <scope>NUCLEOTIDE SEQUENCE [LARGE SCALE GENOMIC DNA]</scope>
    <source>
        <strain>Y51</strain>
    </source>
</reference>
<accession>Q24RW2</accession>
<evidence type="ECO:0000255" key="1">
    <source>
        <dbReference type="HAMAP-Rule" id="MF_00674"/>
    </source>
</evidence>